<name>KTHY_KLEP7</name>
<evidence type="ECO:0000255" key="1">
    <source>
        <dbReference type="HAMAP-Rule" id="MF_00165"/>
    </source>
</evidence>
<sequence>MRSNYIVIEGLEGAGKTTARQLVVETLQSAGIHDMVFTREPGGTILAEKLRSLVLDIQSTGDEVINDKAEVLMFYAARVQLVETVIKPALARGQWVIGDRHDLSTQAYQGGGRGIDRTMLATLRDAVLGDFRPNLTLYLDVTPEVGLQRARARGELDRIEQESMNFFNRTRARYLELAAADPSIRTVDATQPLDAVARDIRATIAQWMAEQAA</sequence>
<proteinExistence type="inferred from homology"/>
<comment type="function">
    <text evidence="1">Phosphorylation of dTMP to form dTDP in both de novo and salvage pathways of dTTP synthesis.</text>
</comment>
<comment type="catalytic activity">
    <reaction evidence="1">
        <text>dTMP + ATP = dTDP + ADP</text>
        <dbReference type="Rhea" id="RHEA:13517"/>
        <dbReference type="ChEBI" id="CHEBI:30616"/>
        <dbReference type="ChEBI" id="CHEBI:58369"/>
        <dbReference type="ChEBI" id="CHEBI:63528"/>
        <dbReference type="ChEBI" id="CHEBI:456216"/>
        <dbReference type="EC" id="2.7.4.9"/>
    </reaction>
</comment>
<comment type="similarity">
    <text evidence="1">Belongs to the thymidylate kinase family.</text>
</comment>
<feature type="chain" id="PRO_1000023205" description="Thymidylate kinase">
    <location>
        <begin position="1"/>
        <end position="213"/>
    </location>
</feature>
<feature type="binding site" evidence="1">
    <location>
        <begin position="10"/>
        <end position="17"/>
    </location>
    <ligand>
        <name>ATP</name>
        <dbReference type="ChEBI" id="CHEBI:30616"/>
    </ligand>
</feature>
<gene>
    <name evidence="1" type="primary">tmk</name>
    <name type="ordered locus">KPN78578_10680</name>
    <name type="ORF">KPN_01096</name>
</gene>
<keyword id="KW-0067">ATP-binding</keyword>
<keyword id="KW-0418">Kinase</keyword>
<keyword id="KW-0545">Nucleotide biosynthesis</keyword>
<keyword id="KW-0547">Nucleotide-binding</keyword>
<keyword id="KW-0808">Transferase</keyword>
<accession>A6T7F8</accession>
<protein>
    <recommendedName>
        <fullName evidence="1">Thymidylate kinase</fullName>
        <ecNumber evidence="1">2.7.4.9</ecNumber>
    </recommendedName>
    <alternativeName>
        <fullName evidence="1">dTMP kinase</fullName>
    </alternativeName>
</protein>
<organism>
    <name type="scientific">Klebsiella pneumoniae subsp. pneumoniae (strain ATCC 700721 / MGH 78578)</name>
    <dbReference type="NCBI Taxonomy" id="272620"/>
    <lineage>
        <taxon>Bacteria</taxon>
        <taxon>Pseudomonadati</taxon>
        <taxon>Pseudomonadota</taxon>
        <taxon>Gammaproteobacteria</taxon>
        <taxon>Enterobacterales</taxon>
        <taxon>Enterobacteriaceae</taxon>
        <taxon>Klebsiella/Raoultella group</taxon>
        <taxon>Klebsiella</taxon>
        <taxon>Klebsiella pneumoniae complex</taxon>
    </lineage>
</organism>
<reference key="1">
    <citation type="submission" date="2006-09" db="EMBL/GenBank/DDBJ databases">
        <authorList>
            <consortium name="The Klebsiella pneumonia Genome Sequencing Project"/>
            <person name="McClelland M."/>
            <person name="Sanderson E.K."/>
            <person name="Spieth J."/>
            <person name="Clifton W.S."/>
            <person name="Latreille P."/>
            <person name="Sabo A."/>
            <person name="Pepin K."/>
            <person name="Bhonagiri V."/>
            <person name="Porwollik S."/>
            <person name="Ali J."/>
            <person name="Wilson R.K."/>
        </authorList>
    </citation>
    <scope>NUCLEOTIDE SEQUENCE [LARGE SCALE GENOMIC DNA]</scope>
    <source>
        <strain>ATCC 700721 / MGH 78578</strain>
    </source>
</reference>
<dbReference type="EC" id="2.7.4.9" evidence="1"/>
<dbReference type="EMBL" id="CP000647">
    <property type="protein sequence ID" value="ABR76529.1"/>
    <property type="molecule type" value="Genomic_DNA"/>
</dbReference>
<dbReference type="RefSeq" id="WP_002900674.1">
    <property type="nucleotide sequence ID" value="NC_009648.1"/>
</dbReference>
<dbReference type="SMR" id="A6T7F8"/>
<dbReference type="STRING" id="272620.KPN_01096"/>
<dbReference type="PaxDb" id="272620-KPN_01096"/>
<dbReference type="EnsemblBacteria" id="ABR76529">
    <property type="protein sequence ID" value="ABR76529"/>
    <property type="gene ID" value="KPN_01096"/>
</dbReference>
<dbReference type="KEGG" id="kpn:KPN_01096"/>
<dbReference type="HOGENOM" id="CLU_049131_0_2_6"/>
<dbReference type="Proteomes" id="UP000000265">
    <property type="component" value="Chromosome"/>
</dbReference>
<dbReference type="GO" id="GO:0005829">
    <property type="term" value="C:cytosol"/>
    <property type="evidence" value="ECO:0007669"/>
    <property type="project" value="TreeGrafter"/>
</dbReference>
<dbReference type="GO" id="GO:0005524">
    <property type="term" value="F:ATP binding"/>
    <property type="evidence" value="ECO:0007669"/>
    <property type="project" value="UniProtKB-UniRule"/>
</dbReference>
<dbReference type="GO" id="GO:0004798">
    <property type="term" value="F:dTMP kinase activity"/>
    <property type="evidence" value="ECO:0007669"/>
    <property type="project" value="UniProtKB-UniRule"/>
</dbReference>
<dbReference type="GO" id="GO:0006233">
    <property type="term" value="P:dTDP biosynthetic process"/>
    <property type="evidence" value="ECO:0007669"/>
    <property type="project" value="InterPro"/>
</dbReference>
<dbReference type="GO" id="GO:0006235">
    <property type="term" value="P:dTTP biosynthetic process"/>
    <property type="evidence" value="ECO:0007669"/>
    <property type="project" value="UniProtKB-UniRule"/>
</dbReference>
<dbReference type="GO" id="GO:0006227">
    <property type="term" value="P:dUDP biosynthetic process"/>
    <property type="evidence" value="ECO:0007669"/>
    <property type="project" value="TreeGrafter"/>
</dbReference>
<dbReference type="CDD" id="cd01672">
    <property type="entry name" value="TMPK"/>
    <property type="match status" value="1"/>
</dbReference>
<dbReference type="FunFam" id="3.40.50.300:FF:000321">
    <property type="entry name" value="Thymidylate kinase"/>
    <property type="match status" value="1"/>
</dbReference>
<dbReference type="Gene3D" id="3.40.50.300">
    <property type="entry name" value="P-loop containing nucleotide triphosphate hydrolases"/>
    <property type="match status" value="1"/>
</dbReference>
<dbReference type="HAMAP" id="MF_00165">
    <property type="entry name" value="Thymidylate_kinase"/>
    <property type="match status" value="1"/>
</dbReference>
<dbReference type="InterPro" id="IPR027417">
    <property type="entry name" value="P-loop_NTPase"/>
</dbReference>
<dbReference type="InterPro" id="IPR039430">
    <property type="entry name" value="Thymidylate_kin-like_dom"/>
</dbReference>
<dbReference type="InterPro" id="IPR018095">
    <property type="entry name" value="Thymidylate_kin_CS"/>
</dbReference>
<dbReference type="InterPro" id="IPR018094">
    <property type="entry name" value="Thymidylate_kinase"/>
</dbReference>
<dbReference type="NCBIfam" id="TIGR00041">
    <property type="entry name" value="DTMP_kinase"/>
    <property type="match status" value="1"/>
</dbReference>
<dbReference type="PANTHER" id="PTHR10344">
    <property type="entry name" value="THYMIDYLATE KINASE"/>
    <property type="match status" value="1"/>
</dbReference>
<dbReference type="PANTHER" id="PTHR10344:SF4">
    <property type="entry name" value="UMP-CMP KINASE 2, MITOCHONDRIAL"/>
    <property type="match status" value="1"/>
</dbReference>
<dbReference type="Pfam" id="PF02223">
    <property type="entry name" value="Thymidylate_kin"/>
    <property type="match status" value="1"/>
</dbReference>
<dbReference type="SUPFAM" id="SSF52540">
    <property type="entry name" value="P-loop containing nucleoside triphosphate hydrolases"/>
    <property type="match status" value="1"/>
</dbReference>
<dbReference type="PROSITE" id="PS01331">
    <property type="entry name" value="THYMIDYLATE_KINASE"/>
    <property type="match status" value="1"/>
</dbReference>